<keyword id="KW-0963">Cytoplasm</keyword>
<keyword id="KW-0276">Fatty acid metabolism</keyword>
<keyword id="KW-0413">Isomerase</keyword>
<keyword id="KW-0442">Lipid degradation</keyword>
<keyword id="KW-0443">Lipid metabolism</keyword>
<keyword id="KW-0456">Lyase</keyword>
<keyword id="KW-0511">Multifunctional enzyme</keyword>
<keyword id="KW-0520">NAD</keyword>
<keyword id="KW-0560">Oxidoreductase</keyword>
<organism>
    <name type="scientific">Salmonella schwarzengrund (strain CVM19633)</name>
    <dbReference type="NCBI Taxonomy" id="439843"/>
    <lineage>
        <taxon>Bacteria</taxon>
        <taxon>Pseudomonadati</taxon>
        <taxon>Pseudomonadota</taxon>
        <taxon>Gammaproteobacteria</taxon>
        <taxon>Enterobacterales</taxon>
        <taxon>Enterobacteriaceae</taxon>
        <taxon>Salmonella</taxon>
    </lineage>
</organism>
<comment type="function">
    <text evidence="1">Catalyzes the formation of a hydroxyacyl-CoA by addition of water on enoyl-CoA. Also exhibits 3-hydroxyacyl-CoA epimerase and 3-hydroxyacyl-CoA dehydrogenase activities.</text>
</comment>
<comment type="catalytic activity">
    <reaction evidence="1">
        <text>a (3S)-3-hydroxyacyl-CoA = a (2E)-enoyl-CoA + H2O</text>
        <dbReference type="Rhea" id="RHEA:16105"/>
        <dbReference type="ChEBI" id="CHEBI:15377"/>
        <dbReference type="ChEBI" id="CHEBI:57318"/>
        <dbReference type="ChEBI" id="CHEBI:58856"/>
        <dbReference type="EC" id="4.2.1.17"/>
    </reaction>
</comment>
<comment type="catalytic activity">
    <reaction evidence="1">
        <text>a 4-saturated-(3S)-3-hydroxyacyl-CoA = a (3E)-enoyl-CoA + H2O</text>
        <dbReference type="Rhea" id="RHEA:20724"/>
        <dbReference type="ChEBI" id="CHEBI:15377"/>
        <dbReference type="ChEBI" id="CHEBI:58521"/>
        <dbReference type="ChEBI" id="CHEBI:137480"/>
        <dbReference type="EC" id="4.2.1.17"/>
    </reaction>
</comment>
<comment type="catalytic activity">
    <reaction evidence="1">
        <text>a (3S)-3-hydroxyacyl-CoA + NAD(+) = a 3-oxoacyl-CoA + NADH + H(+)</text>
        <dbReference type="Rhea" id="RHEA:22432"/>
        <dbReference type="ChEBI" id="CHEBI:15378"/>
        <dbReference type="ChEBI" id="CHEBI:57318"/>
        <dbReference type="ChEBI" id="CHEBI:57540"/>
        <dbReference type="ChEBI" id="CHEBI:57945"/>
        <dbReference type="ChEBI" id="CHEBI:90726"/>
        <dbReference type="EC" id="1.1.1.35"/>
    </reaction>
</comment>
<comment type="catalytic activity">
    <reaction evidence="1">
        <text>(3S)-3-hydroxybutanoyl-CoA = (3R)-3-hydroxybutanoyl-CoA</text>
        <dbReference type="Rhea" id="RHEA:21760"/>
        <dbReference type="ChEBI" id="CHEBI:57315"/>
        <dbReference type="ChEBI" id="CHEBI:57316"/>
        <dbReference type="EC" id="5.1.2.3"/>
    </reaction>
</comment>
<comment type="pathway">
    <text evidence="1">Lipid metabolism; fatty acid beta-oxidation.</text>
</comment>
<comment type="subunit">
    <text evidence="1">Heterotetramer of two alpha chains (FadJ) and two beta chains (FadI).</text>
</comment>
<comment type="subcellular location">
    <subcellularLocation>
        <location evidence="1">Cytoplasm</location>
    </subcellularLocation>
</comment>
<comment type="similarity">
    <text evidence="1">In the N-terminal section; belongs to the enoyl-CoA hydratase/isomerase family.</text>
</comment>
<comment type="similarity">
    <text evidence="1">In the central section; belongs to the 3-hydroxyacyl-CoA dehydrogenase family.</text>
</comment>
<protein>
    <recommendedName>
        <fullName evidence="1">Fatty acid oxidation complex subunit alpha</fullName>
    </recommendedName>
    <domain>
        <recommendedName>
            <fullName evidence="1">Enoyl-CoA hydratase/3-hydroxybutyryl-CoA epimerase</fullName>
            <ecNumber evidence="1">4.2.1.17</ecNumber>
            <ecNumber evidence="1">5.1.2.3</ecNumber>
        </recommendedName>
    </domain>
    <domain>
        <recommendedName>
            <fullName evidence="1">3-hydroxyacyl-CoA dehydrogenase</fullName>
            <ecNumber evidence="1">1.1.1.35</ecNumber>
        </recommendedName>
    </domain>
</protein>
<reference key="1">
    <citation type="journal article" date="2011" name="J. Bacteriol.">
        <title>Comparative genomics of 28 Salmonella enterica isolates: evidence for CRISPR-mediated adaptive sublineage evolution.</title>
        <authorList>
            <person name="Fricke W.F."/>
            <person name="Mammel M.K."/>
            <person name="McDermott P.F."/>
            <person name="Tartera C."/>
            <person name="White D.G."/>
            <person name="Leclerc J.E."/>
            <person name="Ravel J."/>
            <person name="Cebula T.A."/>
        </authorList>
    </citation>
    <scope>NUCLEOTIDE SEQUENCE [LARGE SCALE GENOMIC DNA]</scope>
    <source>
        <strain>CVM19633</strain>
    </source>
</reference>
<dbReference type="EC" id="4.2.1.17" evidence="1"/>
<dbReference type="EC" id="5.1.2.3" evidence="1"/>
<dbReference type="EC" id="1.1.1.35" evidence="1"/>
<dbReference type="EMBL" id="CP001127">
    <property type="protein sequence ID" value="ACF90192.1"/>
    <property type="molecule type" value="Genomic_DNA"/>
</dbReference>
<dbReference type="RefSeq" id="WP_000214151.1">
    <property type="nucleotide sequence ID" value="NC_011094.1"/>
</dbReference>
<dbReference type="SMR" id="B4TQC2"/>
<dbReference type="KEGG" id="sew:SeSA_A2617"/>
<dbReference type="HOGENOM" id="CLU_009834_16_3_6"/>
<dbReference type="UniPathway" id="UPA00659"/>
<dbReference type="Proteomes" id="UP000001865">
    <property type="component" value="Chromosome"/>
</dbReference>
<dbReference type="GO" id="GO:0005737">
    <property type="term" value="C:cytoplasm"/>
    <property type="evidence" value="ECO:0007669"/>
    <property type="project" value="UniProtKB-SubCell"/>
</dbReference>
<dbReference type="GO" id="GO:0008692">
    <property type="term" value="F:3-hydroxybutyryl-CoA epimerase activity"/>
    <property type="evidence" value="ECO:0007669"/>
    <property type="project" value="UniProtKB-UniRule"/>
</dbReference>
<dbReference type="GO" id="GO:0004300">
    <property type="term" value="F:enoyl-CoA hydratase activity"/>
    <property type="evidence" value="ECO:0007669"/>
    <property type="project" value="UniProtKB-UniRule"/>
</dbReference>
<dbReference type="GO" id="GO:0016509">
    <property type="term" value="F:long-chain-3-hydroxyacyl-CoA dehydrogenase activity"/>
    <property type="evidence" value="ECO:0007669"/>
    <property type="project" value="TreeGrafter"/>
</dbReference>
<dbReference type="GO" id="GO:0070403">
    <property type="term" value="F:NAD+ binding"/>
    <property type="evidence" value="ECO:0007669"/>
    <property type="project" value="InterPro"/>
</dbReference>
<dbReference type="GO" id="GO:0006635">
    <property type="term" value="P:fatty acid beta-oxidation"/>
    <property type="evidence" value="ECO:0007669"/>
    <property type="project" value="UniProtKB-UniRule"/>
</dbReference>
<dbReference type="CDD" id="cd06558">
    <property type="entry name" value="crotonase-like"/>
    <property type="match status" value="1"/>
</dbReference>
<dbReference type="FunFam" id="1.10.1040.50:FF:000003">
    <property type="entry name" value="Fatty acid oxidation complex subunit alpha"/>
    <property type="match status" value="1"/>
</dbReference>
<dbReference type="FunFam" id="3.90.226.10:FF:000011">
    <property type="entry name" value="Fatty acid oxidation complex subunit alpha"/>
    <property type="match status" value="1"/>
</dbReference>
<dbReference type="FunFam" id="3.40.50.720:FF:000009">
    <property type="entry name" value="Fatty oxidation complex, alpha subunit"/>
    <property type="match status" value="1"/>
</dbReference>
<dbReference type="Gene3D" id="1.10.1040.50">
    <property type="match status" value="1"/>
</dbReference>
<dbReference type="Gene3D" id="3.90.226.10">
    <property type="entry name" value="2-enoyl-CoA Hydratase, Chain A, domain 1"/>
    <property type="match status" value="1"/>
</dbReference>
<dbReference type="Gene3D" id="3.40.50.720">
    <property type="entry name" value="NAD(P)-binding Rossmann-like Domain"/>
    <property type="match status" value="1"/>
</dbReference>
<dbReference type="HAMAP" id="MF_01617">
    <property type="entry name" value="FadJ"/>
    <property type="match status" value="1"/>
</dbReference>
<dbReference type="InterPro" id="IPR006180">
    <property type="entry name" value="3-OHacyl-CoA_DH_CS"/>
</dbReference>
<dbReference type="InterPro" id="IPR006176">
    <property type="entry name" value="3-OHacyl-CoA_DH_NAD-bd"/>
</dbReference>
<dbReference type="InterPro" id="IPR006108">
    <property type="entry name" value="3HC_DH_C"/>
</dbReference>
<dbReference type="InterPro" id="IPR008927">
    <property type="entry name" value="6-PGluconate_DH-like_C_sf"/>
</dbReference>
<dbReference type="InterPro" id="IPR029045">
    <property type="entry name" value="ClpP/crotonase-like_dom_sf"/>
</dbReference>
<dbReference type="InterPro" id="IPR001753">
    <property type="entry name" value="Enoyl-CoA_hydra/iso"/>
</dbReference>
<dbReference type="InterPro" id="IPR050136">
    <property type="entry name" value="FA_oxidation_alpha_subunit"/>
</dbReference>
<dbReference type="InterPro" id="IPR012802">
    <property type="entry name" value="FadJ"/>
</dbReference>
<dbReference type="InterPro" id="IPR036291">
    <property type="entry name" value="NAD(P)-bd_dom_sf"/>
</dbReference>
<dbReference type="NCBIfam" id="TIGR02440">
    <property type="entry name" value="FadJ"/>
    <property type="match status" value="1"/>
</dbReference>
<dbReference type="NCBIfam" id="NF008363">
    <property type="entry name" value="PRK11154.1"/>
    <property type="match status" value="1"/>
</dbReference>
<dbReference type="PANTHER" id="PTHR43612">
    <property type="entry name" value="TRIFUNCTIONAL ENZYME SUBUNIT ALPHA"/>
    <property type="match status" value="1"/>
</dbReference>
<dbReference type="PANTHER" id="PTHR43612:SF3">
    <property type="entry name" value="TRIFUNCTIONAL ENZYME SUBUNIT ALPHA, MITOCHONDRIAL"/>
    <property type="match status" value="1"/>
</dbReference>
<dbReference type="Pfam" id="PF00725">
    <property type="entry name" value="3HCDH"/>
    <property type="match status" value="1"/>
</dbReference>
<dbReference type="Pfam" id="PF02737">
    <property type="entry name" value="3HCDH_N"/>
    <property type="match status" value="1"/>
</dbReference>
<dbReference type="Pfam" id="PF00378">
    <property type="entry name" value="ECH_1"/>
    <property type="match status" value="1"/>
</dbReference>
<dbReference type="SUPFAM" id="SSF48179">
    <property type="entry name" value="6-phosphogluconate dehydrogenase C-terminal domain-like"/>
    <property type="match status" value="2"/>
</dbReference>
<dbReference type="SUPFAM" id="SSF52096">
    <property type="entry name" value="ClpP/crotonase"/>
    <property type="match status" value="1"/>
</dbReference>
<dbReference type="SUPFAM" id="SSF51735">
    <property type="entry name" value="NAD(P)-binding Rossmann-fold domains"/>
    <property type="match status" value="1"/>
</dbReference>
<dbReference type="PROSITE" id="PS00067">
    <property type="entry name" value="3HCDH"/>
    <property type="match status" value="1"/>
</dbReference>
<proteinExistence type="inferred from homology"/>
<feature type="chain" id="PRO_1000185954" description="Fatty acid oxidation complex subunit alpha">
    <location>
        <begin position="1"/>
        <end position="715"/>
    </location>
</feature>
<feature type="region of interest" description="Enoyl-CoA hydratase" evidence="1">
    <location>
        <begin position="1"/>
        <end position="190"/>
    </location>
</feature>
<feature type="region of interest" description="3-hydroxyacyl-CoA dehydrogenase" evidence="1">
    <location>
        <begin position="306"/>
        <end position="715"/>
    </location>
</feature>
<feature type="site" description="Important for catalytic activity" evidence="1">
    <location>
        <position position="118"/>
    </location>
</feature>
<feature type="site" description="Important for catalytic activity" evidence="1">
    <location>
        <position position="140"/>
    </location>
</feature>
<gene>
    <name evidence="1" type="primary">fadJ</name>
    <name type="ordered locus">SeSA_A2617</name>
</gene>
<evidence type="ECO:0000255" key="1">
    <source>
        <dbReference type="HAMAP-Rule" id="MF_01617"/>
    </source>
</evidence>
<name>FADJ_SALSV</name>
<accession>B4TQC2</accession>
<sequence>MTTTSAFMLNVRLDNVAVVAIDVPGEKVNTLKAEFAAQVRAILKQIRENKALQGVVFISAKADNFIAGADINMIGHCQNAQEAETLARQGQQLMAEIQALPVPVIAAIHGACLGGGLEMALACHRRICTDDVKTVLGLPEVQLGLLPGSGGTQRLPRLVGVSTALDMILTGKQLRARQALRAGLVDDVVPQTILLEAAVELAKKERLAQRTLPVRERILAGPLGRALLFRLVRKKTAQKTQGNYPATERIIDVIETGLAQGSSSGYDAEARAFGELAMTPQSQALRAIFFASTEVKKDPGSDAPPGPLNSVGILGGGLMGGGIAWVTACKGGLPVRIKDINTQGINHALKYSWDLLETKVRRRHIKASERDKQLALISGSTDYRGFSHRDLVIEAVFEDLPLKQQMVAEVEQNCAAHTIFASNTSSLPIGDIAANAARPEQVIGLHFFSPVEKMPLVEVIPHASTSAQTIATTVKLAKKQGKTPIVVSDKAGFYVNRILAPYINEAIRMLTEGERVEHIDAALVKFGFPVGPIQLLDEVGIDTGTKIIPVLEAAYGERFSAPANVVASILNDDRKGRKNGRGFYLYGEKGRKSKKQVDPAIYKLIGVQGQSRLSAQQVADRCVMLMLNEAARCFDEKVIRSARDGDIGAVFGIGFPPFLGGPFRYMDALGPGEMVATLQRLAALYGPRYAPCEQLVRMAERREHFWTNGETDQGN</sequence>